<gene>
    <name type="ordered locus">RHOS4_12710</name>
    <name type="ordered locus">RSP_2684</name>
</gene>
<sequence>MIHDRIEDFLASLPRTGALAGLDLGTKTVGVAVSDGLRRIATPLLTVRRTKFTEDAAKLKAIAAERRLVGIVLGLPRNMDGSEGPRAQSTRAFARNLVQVLPLPVGFWDERLSTVAAERALLEADTSRKRRAEVIDHVAAGYILQGVLDRLDWLGREGGA</sequence>
<protein>
    <recommendedName>
        <fullName evidence="1">Putative pre-16S rRNA nuclease</fullName>
        <ecNumber evidence="1">3.1.-.-</ecNumber>
    </recommendedName>
</protein>
<organism>
    <name type="scientific">Cereibacter sphaeroides (strain ATCC 17023 / DSM 158 / JCM 6121 / CCUG 31486 / LMG 2827 / NBRC 12203 / NCIMB 8253 / ATH 2.4.1.)</name>
    <name type="common">Rhodobacter sphaeroides</name>
    <dbReference type="NCBI Taxonomy" id="272943"/>
    <lineage>
        <taxon>Bacteria</taxon>
        <taxon>Pseudomonadati</taxon>
        <taxon>Pseudomonadota</taxon>
        <taxon>Alphaproteobacteria</taxon>
        <taxon>Rhodobacterales</taxon>
        <taxon>Paracoccaceae</taxon>
        <taxon>Cereibacter</taxon>
    </lineage>
</organism>
<reference key="1">
    <citation type="submission" date="2005-09" db="EMBL/GenBank/DDBJ databases">
        <title>Complete sequence of chromosome 1 of Rhodobacter sphaeroides 2.4.1.</title>
        <authorList>
            <person name="Copeland A."/>
            <person name="Lucas S."/>
            <person name="Lapidus A."/>
            <person name="Barry K."/>
            <person name="Detter J.C."/>
            <person name="Glavina T."/>
            <person name="Hammon N."/>
            <person name="Israni S."/>
            <person name="Pitluck S."/>
            <person name="Richardson P."/>
            <person name="Mackenzie C."/>
            <person name="Choudhary M."/>
            <person name="Larimer F."/>
            <person name="Hauser L.J."/>
            <person name="Land M."/>
            <person name="Donohue T.J."/>
            <person name="Kaplan S."/>
        </authorList>
    </citation>
    <scope>NUCLEOTIDE SEQUENCE [LARGE SCALE GENOMIC DNA]</scope>
    <source>
        <strain>ATCC 17023 / DSM 158 / JCM 6121 / CCUG 31486 / LMG 2827 / NBRC 12203 / NCIMB 8253 / ATH 2.4.1.</strain>
    </source>
</reference>
<evidence type="ECO:0000255" key="1">
    <source>
        <dbReference type="HAMAP-Rule" id="MF_00651"/>
    </source>
</evidence>
<comment type="function">
    <text evidence="1">Could be a nuclease involved in processing of the 5'-end of pre-16S rRNA.</text>
</comment>
<comment type="subcellular location">
    <subcellularLocation>
        <location evidence="1">Cytoplasm</location>
    </subcellularLocation>
</comment>
<comment type="similarity">
    <text evidence="1">Belongs to the YqgF nuclease family.</text>
</comment>
<feature type="chain" id="PRO_0000257575" description="Putative pre-16S rRNA nuclease">
    <location>
        <begin position="1"/>
        <end position="160"/>
    </location>
</feature>
<name>YQGF_CERS4</name>
<dbReference type="EC" id="3.1.-.-" evidence="1"/>
<dbReference type="EMBL" id="CP000143">
    <property type="protein sequence ID" value="ABA78839.1"/>
    <property type="molecule type" value="Genomic_DNA"/>
</dbReference>
<dbReference type="RefSeq" id="YP_352740.1">
    <property type="nucleotide sequence ID" value="NC_007493.2"/>
</dbReference>
<dbReference type="SMR" id="Q3J2Z5"/>
<dbReference type="STRING" id="272943.RSP_2684"/>
<dbReference type="EnsemblBacteria" id="ABA78839">
    <property type="protein sequence ID" value="ABA78839"/>
    <property type="gene ID" value="RSP_2684"/>
</dbReference>
<dbReference type="GeneID" id="3720375"/>
<dbReference type="KEGG" id="rsp:RSP_2684"/>
<dbReference type="PATRIC" id="fig|272943.9.peg.1608"/>
<dbReference type="eggNOG" id="COG0816">
    <property type="taxonomic scope" value="Bacteria"/>
</dbReference>
<dbReference type="OrthoDB" id="9796140at2"/>
<dbReference type="PhylomeDB" id="Q3J2Z5"/>
<dbReference type="Proteomes" id="UP000002703">
    <property type="component" value="Chromosome 1"/>
</dbReference>
<dbReference type="GO" id="GO:0005829">
    <property type="term" value="C:cytosol"/>
    <property type="evidence" value="ECO:0007669"/>
    <property type="project" value="TreeGrafter"/>
</dbReference>
<dbReference type="GO" id="GO:0004518">
    <property type="term" value="F:nuclease activity"/>
    <property type="evidence" value="ECO:0007669"/>
    <property type="project" value="UniProtKB-KW"/>
</dbReference>
<dbReference type="GO" id="GO:0000967">
    <property type="term" value="P:rRNA 5'-end processing"/>
    <property type="evidence" value="ECO:0007669"/>
    <property type="project" value="UniProtKB-UniRule"/>
</dbReference>
<dbReference type="CDD" id="cd16964">
    <property type="entry name" value="YqgF"/>
    <property type="match status" value="1"/>
</dbReference>
<dbReference type="Gene3D" id="3.30.420.140">
    <property type="entry name" value="YqgF/RNase H-like domain"/>
    <property type="match status" value="1"/>
</dbReference>
<dbReference type="HAMAP" id="MF_00651">
    <property type="entry name" value="Nuclease_YqgF"/>
    <property type="match status" value="1"/>
</dbReference>
<dbReference type="InterPro" id="IPR012337">
    <property type="entry name" value="RNaseH-like_sf"/>
</dbReference>
<dbReference type="InterPro" id="IPR005227">
    <property type="entry name" value="YqgF"/>
</dbReference>
<dbReference type="InterPro" id="IPR006641">
    <property type="entry name" value="YqgF/RNaseH-like_dom"/>
</dbReference>
<dbReference type="InterPro" id="IPR037027">
    <property type="entry name" value="YqgF/RNaseH-like_dom_sf"/>
</dbReference>
<dbReference type="NCBIfam" id="TIGR00250">
    <property type="entry name" value="RNAse_H_YqgF"/>
    <property type="match status" value="1"/>
</dbReference>
<dbReference type="PANTHER" id="PTHR33317">
    <property type="entry name" value="POLYNUCLEOTIDYL TRANSFERASE, RIBONUCLEASE H-LIKE SUPERFAMILY PROTEIN"/>
    <property type="match status" value="1"/>
</dbReference>
<dbReference type="PANTHER" id="PTHR33317:SF4">
    <property type="entry name" value="POLYNUCLEOTIDYL TRANSFERASE, RIBONUCLEASE H-LIKE SUPERFAMILY PROTEIN"/>
    <property type="match status" value="1"/>
</dbReference>
<dbReference type="Pfam" id="PF03652">
    <property type="entry name" value="RuvX"/>
    <property type="match status" value="1"/>
</dbReference>
<dbReference type="SMART" id="SM00732">
    <property type="entry name" value="YqgFc"/>
    <property type="match status" value="1"/>
</dbReference>
<dbReference type="SUPFAM" id="SSF53098">
    <property type="entry name" value="Ribonuclease H-like"/>
    <property type="match status" value="1"/>
</dbReference>
<keyword id="KW-0963">Cytoplasm</keyword>
<keyword id="KW-0378">Hydrolase</keyword>
<keyword id="KW-0540">Nuclease</keyword>
<keyword id="KW-1185">Reference proteome</keyword>
<keyword id="KW-0690">Ribosome biogenesis</keyword>
<proteinExistence type="inferred from homology"/>
<accession>Q3J2Z5</accession>